<proteinExistence type="inferred from homology"/>
<evidence type="ECO:0000255" key="1">
    <source>
        <dbReference type="HAMAP-Rule" id="MF_00368"/>
    </source>
</evidence>
<evidence type="ECO:0000305" key="2"/>
<protein>
    <recommendedName>
        <fullName evidence="1">Large ribosomal subunit protein bL12</fullName>
    </recommendedName>
    <alternativeName>
        <fullName evidence="2">50S ribosomal protein L7/L12</fullName>
    </alternativeName>
</protein>
<reference key="1">
    <citation type="journal article" date="2004" name="J. Bacteriol.">
        <title>The genome sequence of Mycoplasma hyopneumoniae strain 232, the agent of swine mycoplasmosis.</title>
        <authorList>
            <person name="Minion F.C."/>
            <person name="Lefkowitz E.J."/>
            <person name="Madsen M.L."/>
            <person name="Cleary B.J."/>
            <person name="Swartzell S.M."/>
            <person name="Mahairas G.G."/>
        </authorList>
    </citation>
    <scope>NUCLEOTIDE SEQUENCE [LARGE SCALE GENOMIC DNA]</scope>
    <source>
        <strain>232</strain>
    </source>
</reference>
<comment type="function">
    <text evidence="1">Forms part of the ribosomal stalk which helps the ribosome interact with GTP-bound translation factors. Is thus essential for accurate translation.</text>
</comment>
<comment type="subunit">
    <text evidence="1">Homodimer. Part of the ribosomal stalk of the 50S ribosomal subunit. Forms a multimeric L10(L12)X complex, where L10 forms an elongated spine to which 2 to 4 L12 dimers bind in a sequential fashion. Binds GTP-bound translation factors.</text>
</comment>
<comment type="similarity">
    <text evidence="1">Belongs to the bacterial ribosomal protein bL12 family.</text>
</comment>
<accession>Q5ZZS0</accession>
<gene>
    <name evidence="1" type="primary">rplL</name>
    <name type="ordered locus">mhp637</name>
</gene>
<feature type="chain" id="PRO_1000195812" description="Large ribosomal subunit protein bL12">
    <location>
        <begin position="1"/>
        <end position="121"/>
    </location>
</feature>
<dbReference type="EMBL" id="AE017332">
    <property type="protein sequence ID" value="AAV28004.1"/>
    <property type="molecule type" value="Genomic_DNA"/>
</dbReference>
<dbReference type="RefSeq" id="WP_011206468.1">
    <property type="nucleotide sequence ID" value="NC_006360.1"/>
</dbReference>
<dbReference type="SMR" id="Q5ZZS0"/>
<dbReference type="GeneID" id="41334921"/>
<dbReference type="KEGG" id="mhy:mhp637"/>
<dbReference type="eggNOG" id="COG0222">
    <property type="taxonomic scope" value="Bacteria"/>
</dbReference>
<dbReference type="HOGENOM" id="CLU_086499_3_2_14"/>
<dbReference type="PhylomeDB" id="Q5ZZS0"/>
<dbReference type="Proteomes" id="UP000006822">
    <property type="component" value="Chromosome"/>
</dbReference>
<dbReference type="GO" id="GO:0022625">
    <property type="term" value="C:cytosolic large ribosomal subunit"/>
    <property type="evidence" value="ECO:0007669"/>
    <property type="project" value="TreeGrafter"/>
</dbReference>
<dbReference type="GO" id="GO:0003729">
    <property type="term" value="F:mRNA binding"/>
    <property type="evidence" value="ECO:0007669"/>
    <property type="project" value="TreeGrafter"/>
</dbReference>
<dbReference type="GO" id="GO:0003735">
    <property type="term" value="F:structural constituent of ribosome"/>
    <property type="evidence" value="ECO:0007669"/>
    <property type="project" value="InterPro"/>
</dbReference>
<dbReference type="GO" id="GO:0006412">
    <property type="term" value="P:translation"/>
    <property type="evidence" value="ECO:0007669"/>
    <property type="project" value="UniProtKB-UniRule"/>
</dbReference>
<dbReference type="CDD" id="cd00387">
    <property type="entry name" value="Ribosomal_L7_L12"/>
    <property type="match status" value="1"/>
</dbReference>
<dbReference type="FunFam" id="3.30.1390.10:FF:000001">
    <property type="entry name" value="50S ribosomal protein L7/L12"/>
    <property type="match status" value="1"/>
</dbReference>
<dbReference type="Gene3D" id="3.30.1390.10">
    <property type="match status" value="1"/>
</dbReference>
<dbReference type="Gene3D" id="1.20.5.710">
    <property type="entry name" value="Single helix bin"/>
    <property type="match status" value="1"/>
</dbReference>
<dbReference type="HAMAP" id="MF_00368">
    <property type="entry name" value="Ribosomal_bL12"/>
    <property type="match status" value="1"/>
</dbReference>
<dbReference type="InterPro" id="IPR000206">
    <property type="entry name" value="Ribosomal_bL12"/>
</dbReference>
<dbReference type="InterPro" id="IPR013823">
    <property type="entry name" value="Ribosomal_bL12_C"/>
</dbReference>
<dbReference type="InterPro" id="IPR014719">
    <property type="entry name" value="Ribosomal_bL12_C/ClpS-like"/>
</dbReference>
<dbReference type="InterPro" id="IPR008932">
    <property type="entry name" value="Ribosomal_bL12_oligo"/>
</dbReference>
<dbReference type="InterPro" id="IPR036235">
    <property type="entry name" value="Ribosomal_bL12_oligo_N_sf"/>
</dbReference>
<dbReference type="NCBIfam" id="TIGR00855">
    <property type="entry name" value="L12"/>
    <property type="match status" value="1"/>
</dbReference>
<dbReference type="PANTHER" id="PTHR45987">
    <property type="entry name" value="39S RIBOSOMAL PROTEIN L12"/>
    <property type="match status" value="1"/>
</dbReference>
<dbReference type="PANTHER" id="PTHR45987:SF4">
    <property type="entry name" value="LARGE RIBOSOMAL SUBUNIT PROTEIN BL12M"/>
    <property type="match status" value="1"/>
</dbReference>
<dbReference type="Pfam" id="PF00542">
    <property type="entry name" value="Ribosomal_L12"/>
    <property type="match status" value="1"/>
</dbReference>
<dbReference type="Pfam" id="PF16320">
    <property type="entry name" value="Ribosomal_L12_N"/>
    <property type="match status" value="1"/>
</dbReference>
<dbReference type="SUPFAM" id="SSF54736">
    <property type="entry name" value="ClpS-like"/>
    <property type="match status" value="1"/>
</dbReference>
<dbReference type="SUPFAM" id="SSF48300">
    <property type="entry name" value="Ribosomal protein L7/12, oligomerisation (N-terminal) domain"/>
    <property type="match status" value="1"/>
</dbReference>
<sequence>MAKITKEQFIESLKEMTIKEVMEFVDALKEEFGVDPSAVAVAATPVATEEVKTEVKLTLKAAGQQKVAVIKVVKDLLGLSLMDAKKLVDAAPSVLKEAIKPEEAEEYKAKLVAAGAEVSID</sequence>
<keyword id="KW-0687">Ribonucleoprotein</keyword>
<keyword id="KW-0689">Ribosomal protein</keyword>
<name>RL7_MESH2</name>
<organism>
    <name type="scientific">Mesomycoplasma hyopneumoniae (strain 232)</name>
    <name type="common">Mycoplasma hyopneumoniae</name>
    <dbReference type="NCBI Taxonomy" id="295358"/>
    <lineage>
        <taxon>Bacteria</taxon>
        <taxon>Bacillati</taxon>
        <taxon>Mycoplasmatota</taxon>
        <taxon>Mycoplasmoidales</taxon>
        <taxon>Metamycoplasmataceae</taxon>
        <taxon>Mesomycoplasma</taxon>
    </lineage>
</organism>